<keyword id="KW-0067">ATP-binding</keyword>
<keyword id="KW-0131">Cell cycle</keyword>
<keyword id="KW-0132">Cell division</keyword>
<keyword id="KW-0133">Cell shape</keyword>
<keyword id="KW-0961">Cell wall biogenesis/degradation</keyword>
<keyword id="KW-0963">Cytoplasm</keyword>
<keyword id="KW-0436">Ligase</keyword>
<keyword id="KW-0547">Nucleotide-binding</keyword>
<keyword id="KW-0573">Peptidoglycan synthesis</keyword>
<proteinExistence type="inferred from homology"/>
<accession>Q047T2</accession>
<comment type="function">
    <text evidence="1">Catalyzes the addition of an amino acid to the nucleotide precursor UDP-N-acetylmuramoyl-L-alanyl-D-glutamate (UMAG) in the biosynthesis of bacterial cell-wall peptidoglycan.</text>
</comment>
<comment type="pathway">
    <text evidence="1">Cell wall biogenesis; peptidoglycan biosynthesis.</text>
</comment>
<comment type="subcellular location">
    <subcellularLocation>
        <location evidence="1">Cytoplasm</location>
    </subcellularLocation>
</comment>
<comment type="PTM">
    <text evidence="1">Carboxylation is probably crucial for Mg(2+) binding and, consequently, for the gamma-phosphate positioning of ATP.</text>
</comment>
<comment type="similarity">
    <text evidence="1">Belongs to the MurCDEF family. MurE subfamily.</text>
</comment>
<name>MURE_LACDB</name>
<sequence length="516" mass="56713">MNISLNTCILILKEHHLLKSSAVQDTVQTIMEAVSYDSRDVQNNSLFFCKGAGFRPTYLTMAKENGAIAYVAEQPYPEGTGMHALIVRNVSKAMALLSAAFYSFPQDDLFLVGFTGTKGKTTSAYFLKGMLDQLNGGRTALLSSVDNILGPAPEDTFKSSLTTPESLDLFRDMRRAVDNGMTHMVMEVSSQAYKKSRVFGLTYDLGFFLNISPDHIGVNEHPNFEDYLHCKLQLLVNSRKCIINAETDRFADVYAAATTTTNPDSIYLFARDGFENPDLKKPIDFRYKSVETDLAETKFTLTTASSKAHKLPISGEYTLQMIGDFNETNATGAIIGAGLAGMSYEDCAKGIRHVTIPGRMETVTTQKHGLIVVDYAHNKASMLALMRFMRREFTTPRVIVVVGAPGDKGISRRPGFSESLTAEADKAYLTTDDPGFENAQDICEEIDAGIDHSKCETVIELDREKAIKEAISEAGPDDVVLLCGKGADAFQKIRGVDTPYAGDIVIARQVIQELEK</sequence>
<reference key="1">
    <citation type="journal article" date="2006" name="Proc. Natl. Acad. Sci. U.S.A.">
        <title>Comparative genomics of the lactic acid bacteria.</title>
        <authorList>
            <person name="Makarova K.S."/>
            <person name="Slesarev A."/>
            <person name="Wolf Y.I."/>
            <person name="Sorokin A."/>
            <person name="Mirkin B."/>
            <person name="Koonin E.V."/>
            <person name="Pavlov A."/>
            <person name="Pavlova N."/>
            <person name="Karamychev V."/>
            <person name="Polouchine N."/>
            <person name="Shakhova V."/>
            <person name="Grigoriev I."/>
            <person name="Lou Y."/>
            <person name="Rohksar D."/>
            <person name="Lucas S."/>
            <person name="Huang K."/>
            <person name="Goodstein D.M."/>
            <person name="Hawkins T."/>
            <person name="Plengvidhya V."/>
            <person name="Welker D."/>
            <person name="Hughes J."/>
            <person name="Goh Y."/>
            <person name="Benson A."/>
            <person name="Baldwin K."/>
            <person name="Lee J.-H."/>
            <person name="Diaz-Muniz I."/>
            <person name="Dosti B."/>
            <person name="Smeianov V."/>
            <person name="Wechter W."/>
            <person name="Barabote R."/>
            <person name="Lorca G."/>
            <person name="Altermann E."/>
            <person name="Barrangou R."/>
            <person name="Ganesan B."/>
            <person name="Xie Y."/>
            <person name="Rawsthorne H."/>
            <person name="Tamir D."/>
            <person name="Parker C."/>
            <person name="Breidt F."/>
            <person name="Broadbent J.R."/>
            <person name="Hutkins R."/>
            <person name="O'Sullivan D."/>
            <person name="Steele J."/>
            <person name="Unlu G."/>
            <person name="Saier M.H. Jr."/>
            <person name="Klaenhammer T."/>
            <person name="Richardson P."/>
            <person name="Kozyavkin S."/>
            <person name="Weimer B.C."/>
            <person name="Mills D.A."/>
        </authorList>
    </citation>
    <scope>NUCLEOTIDE SEQUENCE [LARGE SCALE GENOMIC DNA]</scope>
    <source>
        <strain>ATCC BAA-365 / Lb-18</strain>
    </source>
</reference>
<feature type="chain" id="PRO_1000012364" description="UDP-N-acetylmuramyl-tripeptide synthetase">
    <location>
        <begin position="1"/>
        <end position="516"/>
    </location>
</feature>
<feature type="binding site" evidence="1">
    <location>
        <position position="38"/>
    </location>
    <ligand>
        <name>UDP-N-acetyl-alpha-D-muramoyl-L-alanyl-D-glutamate</name>
        <dbReference type="ChEBI" id="CHEBI:83900"/>
    </ligand>
</feature>
<feature type="binding site" evidence="1">
    <location>
        <begin position="116"/>
        <end position="122"/>
    </location>
    <ligand>
        <name>ATP</name>
        <dbReference type="ChEBI" id="CHEBI:30616"/>
    </ligand>
</feature>
<feature type="binding site" evidence="1">
    <location>
        <begin position="162"/>
        <end position="163"/>
    </location>
    <ligand>
        <name>UDP-N-acetyl-alpha-D-muramoyl-L-alanyl-D-glutamate</name>
        <dbReference type="ChEBI" id="CHEBI:83900"/>
    </ligand>
</feature>
<feature type="binding site" evidence="1">
    <location>
        <position position="189"/>
    </location>
    <ligand>
        <name>UDP-N-acetyl-alpha-D-muramoyl-L-alanyl-D-glutamate</name>
        <dbReference type="ChEBI" id="CHEBI:83900"/>
    </ligand>
</feature>
<feature type="binding site" evidence="1">
    <location>
        <position position="197"/>
    </location>
    <ligand>
        <name>UDP-N-acetyl-alpha-D-muramoyl-L-alanyl-D-glutamate</name>
        <dbReference type="ChEBI" id="CHEBI:83900"/>
    </ligand>
</feature>
<feature type="modified residue" description="N6-carboxylysine" evidence="1">
    <location>
        <position position="231"/>
    </location>
</feature>
<dbReference type="EC" id="6.3.2.-" evidence="1"/>
<dbReference type="EMBL" id="CP000412">
    <property type="protein sequence ID" value="ABJ59290.1"/>
    <property type="molecule type" value="Genomic_DNA"/>
</dbReference>
<dbReference type="RefSeq" id="WP_003621127.1">
    <property type="nucleotide sequence ID" value="NC_008529.1"/>
</dbReference>
<dbReference type="SMR" id="Q047T2"/>
<dbReference type="KEGG" id="lbu:LBUL_1891"/>
<dbReference type="HOGENOM" id="CLU_022291_4_2_9"/>
<dbReference type="BioCyc" id="LDEL321956:LBUL_RS08950-MONOMER"/>
<dbReference type="UniPathway" id="UPA00219"/>
<dbReference type="GO" id="GO:0005737">
    <property type="term" value="C:cytoplasm"/>
    <property type="evidence" value="ECO:0007669"/>
    <property type="project" value="UniProtKB-SubCell"/>
</dbReference>
<dbReference type="GO" id="GO:0016881">
    <property type="term" value="F:acid-amino acid ligase activity"/>
    <property type="evidence" value="ECO:0007669"/>
    <property type="project" value="UniProtKB-UniRule"/>
</dbReference>
<dbReference type="GO" id="GO:0005524">
    <property type="term" value="F:ATP binding"/>
    <property type="evidence" value="ECO:0007669"/>
    <property type="project" value="UniProtKB-UniRule"/>
</dbReference>
<dbReference type="GO" id="GO:0000287">
    <property type="term" value="F:magnesium ion binding"/>
    <property type="evidence" value="ECO:0007669"/>
    <property type="project" value="UniProtKB-UniRule"/>
</dbReference>
<dbReference type="GO" id="GO:0051301">
    <property type="term" value="P:cell division"/>
    <property type="evidence" value="ECO:0007669"/>
    <property type="project" value="UniProtKB-KW"/>
</dbReference>
<dbReference type="GO" id="GO:0071555">
    <property type="term" value="P:cell wall organization"/>
    <property type="evidence" value="ECO:0007669"/>
    <property type="project" value="UniProtKB-KW"/>
</dbReference>
<dbReference type="GO" id="GO:0009252">
    <property type="term" value="P:peptidoglycan biosynthetic process"/>
    <property type="evidence" value="ECO:0007669"/>
    <property type="project" value="UniProtKB-UniRule"/>
</dbReference>
<dbReference type="GO" id="GO:0008360">
    <property type="term" value="P:regulation of cell shape"/>
    <property type="evidence" value="ECO:0007669"/>
    <property type="project" value="UniProtKB-KW"/>
</dbReference>
<dbReference type="Gene3D" id="3.90.190.20">
    <property type="entry name" value="Mur ligase, C-terminal domain"/>
    <property type="match status" value="1"/>
</dbReference>
<dbReference type="Gene3D" id="3.40.1190.10">
    <property type="entry name" value="Mur-like, catalytic domain"/>
    <property type="match status" value="1"/>
</dbReference>
<dbReference type="Gene3D" id="3.40.1390.10">
    <property type="entry name" value="MurE/MurF, N-terminal domain"/>
    <property type="match status" value="1"/>
</dbReference>
<dbReference type="HAMAP" id="MF_00208">
    <property type="entry name" value="MurE"/>
    <property type="match status" value="1"/>
</dbReference>
<dbReference type="InterPro" id="IPR036565">
    <property type="entry name" value="Mur-like_cat_sf"/>
</dbReference>
<dbReference type="InterPro" id="IPR004101">
    <property type="entry name" value="Mur_ligase_C"/>
</dbReference>
<dbReference type="InterPro" id="IPR036615">
    <property type="entry name" value="Mur_ligase_C_dom_sf"/>
</dbReference>
<dbReference type="InterPro" id="IPR013221">
    <property type="entry name" value="Mur_ligase_cen"/>
</dbReference>
<dbReference type="InterPro" id="IPR035911">
    <property type="entry name" value="MurE/MurF_N"/>
</dbReference>
<dbReference type="InterPro" id="IPR005761">
    <property type="entry name" value="UDP-N-AcMur-Glu-dNH2Pim_ligase"/>
</dbReference>
<dbReference type="NCBIfam" id="TIGR01085">
    <property type="entry name" value="murE"/>
    <property type="match status" value="1"/>
</dbReference>
<dbReference type="NCBIfam" id="NF001127">
    <property type="entry name" value="PRK00139.2-1"/>
    <property type="match status" value="1"/>
</dbReference>
<dbReference type="NCBIfam" id="NF001130">
    <property type="entry name" value="PRK00139.2-4"/>
    <property type="match status" value="1"/>
</dbReference>
<dbReference type="PANTHER" id="PTHR23135">
    <property type="entry name" value="MUR LIGASE FAMILY MEMBER"/>
    <property type="match status" value="1"/>
</dbReference>
<dbReference type="PANTHER" id="PTHR23135:SF4">
    <property type="entry name" value="UDP-N-ACETYLMURAMOYL-L-ALANYL-D-GLUTAMATE--2,6-DIAMINOPIMELATE LIGASE MURE HOMOLOG, CHLOROPLASTIC"/>
    <property type="match status" value="1"/>
</dbReference>
<dbReference type="Pfam" id="PF02875">
    <property type="entry name" value="Mur_ligase_C"/>
    <property type="match status" value="1"/>
</dbReference>
<dbReference type="Pfam" id="PF08245">
    <property type="entry name" value="Mur_ligase_M"/>
    <property type="match status" value="1"/>
</dbReference>
<dbReference type="SUPFAM" id="SSF53623">
    <property type="entry name" value="MurD-like peptide ligases, catalytic domain"/>
    <property type="match status" value="1"/>
</dbReference>
<dbReference type="SUPFAM" id="SSF53244">
    <property type="entry name" value="MurD-like peptide ligases, peptide-binding domain"/>
    <property type="match status" value="1"/>
</dbReference>
<dbReference type="SUPFAM" id="SSF63418">
    <property type="entry name" value="MurE/MurF N-terminal domain"/>
    <property type="match status" value="1"/>
</dbReference>
<evidence type="ECO:0000255" key="1">
    <source>
        <dbReference type="HAMAP-Rule" id="MF_00208"/>
    </source>
</evidence>
<protein>
    <recommendedName>
        <fullName evidence="1">UDP-N-acetylmuramyl-tripeptide synthetase</fullName>
        <ecNumber evidence="1">6.3.2.-</ecNumber>
    </recommendedName>
    <alternativeName>
        <fullName evidence="1">UDP-MurNAc-tripeptide synthetase</fullName>
    </alternativeName>
</protein>
<organism>
    <name type="scientific">Lactobacillus delbrueckii subsp. bulgaricus (strain ATCC BAA-365 / Lb-18)</name>
    <dbReference type="NCBI Taxonomy" id="321956"/>
    <lineage>
        <taxon>Bacteria</taxon>
        <taxon>Bacillati</taxon>
        <taxon>Bacillota</taxon>
        <taxon>Bacilli</taxon>
        <taxon>Lactobacillales</taxon>
        <taxon>Lactobacillaceae</taxon>
        <taxon>Lactobacillus</taxon>
    </lineage>
</organism>
<gene>
    <name evidence="1" type="primary">murE</name>
    <name type="ordered locus">LBUL_1891</name>
</gene>